<proteinExistence type="inferred from homology"/>
<protein>
    <recommendedName>
        <fullName evidence="1">[LysW]-L-2-aminoadipate/[LysW]-L-glutamate phosphate reductase</fullName>
        <ecNumber evidence="1">1.2.1.103</ecNumber>
        <ecNumber evidence="1">1.2.1.106</ecNumber>
    </recommendedName>
</protein>
<comment type="function">
    <text evidence="1">Involved in both the arginine and lysine biosynthetic pathways.</text>
</comment>
<comment type="catalytic activity">
    <reaction evidence="1">
        <text>[amino-group carrier protein]-C-terminal-N-(1-carboxy-5-oxopentan-1-yl)-L-glutamine + phosphate + NADP(+) = [amino-group carrier protein]-C-terminal-N-(1-carboxy-5-phosphooxy-5-oxopentan-1-yl)-L-glutamine + NADPH + H(+)</text>
        <dbReference type="Rhea" id="RHEA:41948"/>
        <dbReference type="Rhea" id="RHEA-COMP:9712"/>
        <dbReference type="Rhea" id="RHEA-COMP:9714"/>
        <dbReference type="ChEBI" id="CHEBI:15378"/>
        <dbReference type="ChEBI" id="CHEBI:43474"/>
        <dbReference type="ChEBI" id="CHEBI:57783"/>
        <dbReference type="ChEBI" id="CHEBI:58349"/>
        <dbReference type="ChEBI" id="CHEBI:78499"/>
        <dbReference type="ChEBI" id="CHEBI:78501"/>
        <dbReference type="EC" id="1.2.1.103"/>
    </reaction>
</comment>
<comment type="catalytic activity">
    <reaction evidence="1">
        <text>[amino-group carrier protein]-C-terminal-gamma-(L-glutamyl-5-semialdehyde)-L-glutamate + phosphate + NADP(+) = [amino-group carrier protein]-C-terminal-gamma-(5-phospho-L-glutamyl)-L-glutamate + NADPH + H(+)</text>
        <dbReference type="Rhea" id="RHEA:52668"/>
        <dbReference type="Rhea" id="RHEA-COMP:13313"/>
        <dbReference type="Rhea" id="RHEA-COMP:13327"/>
        <dbReference type="ChEBI" id="CHEBI:15378"/>
        <dbReference type="ChEBI" id="CHEBI:43474"/>
        <dbReference type="ChEBI" id="CHEBI:57783"/>
        <dbReference type="ChEBI" id="CHEBI:58349"/>
        <dbReference type="ChEBI" id="CHEBI:136717"/>
        <dbReference type="ChEBI" id="CHEBI:136761"/>
        <dbReference type="EC" id="1.2.1.106"/>
    </reaction>
</comment>
<comment type="pathway">
    <text evidence="1">Amino-acid biosynthesis; L-lysine biosynthesis via AAA pathway; L-lysine from L-alpha-aminoadipate (Thermus route): step 3/5.</text>
</comment>
<comment type="pathway">
    <text evidence="1">Amino-acid biosynthesis; L-arginine biosynthesis.</text>
</comment>
<comment type="subcellular location">
    <subcellularLocation>
        <location evidence="1">Cytoplasm</location>
    </subcellularLocation>
</comment>
<comment type="similarity">
    <text evidence="1">Belongs to the NAGSA dehydrogenase family. Type 1 subfamily. LysY sub-subfamily.</text>
</comment>
<reference key="1">
    <citation type="journal article" date="2001" name="DNA Res.">
        <title>Complete genome sequence of an aerobic thermoacidophilic Crenarchaeon, Sulfolobus tokodaii strain7.</title>
        <authorList>
            <person name="Kawarabayasi Y."/>
            <person name="Hino Y."/>
            <person name="Horikawa H."/>
            <person name="Jin-no K."/>
            <person name="Takahashi M."/>
            <person name="Sekine M."/>
            <person name="Baba S."/>
            <person name="Ankai A."/>
            <person name="Kosugi H."/>
            <person name="Hosoyama A."/>
            <person name="Fukui S."/>
            <person name="Nagai Y."/>
            <person name="Nishijima K."/>
            <person name="Otsuka R."/>
            <person name="Nakazawa H."/>
            <person name="Takamiya M."/>
            <person name="Kato Y."/>
            <person name="Yoshizawa T."/>
            <person name="Tanaka T."/>
            <person name="Kudoh Y."/>
            <person name="Yamazaki J."/>
            <person name="Kushida N."/>
            <person name="Oguchi A."/>
            <person name="Aoki K."/>
            <person name="Masuda S."/>
            <person name="Yanagii M."/>
            <person name="Nishimura M."/>
            <person name="Yamagishi A."/>
            <person name="Oshima T."/>
            <person name="Kikuchi H."/>
        </authorList>
    </citation>
    <scope>NUCLEOTIDE SEQUENCE [LARGE SCALE GENOMIC DNA]</scope>
    <source>
        <strain>DSM 16993 / JCM 10545 / NBRC 100140 / 7</strain>
    </source>
</reference>
<evidence type="ECO:0000255" key="1">
    <source>
        <dbReference type="HAMAP-Rule" id="MF_02083"/>
    </source>
</evidence>
<organism>
    <name type="scientific">Sulfurisphaera tokodaii (strain DSM 16993 / JCM 10545 / NBRC 100140 / 7)</name>
    <name type="common">Sulfolobus tokodaii</name>
    <dbReference type="NCBI Taxonomy" id="273063"/>
    <lineage>
        <taxon>Archaea</taxon>
        <taxon>Thermoproteota</taxon>
        <taxon>Thermoprotei</taxon>
        <taxon>Sulfolobales</taxon>
        <taxon>Sulfolobaceae</taxon>
        <taxon>Sulfurisphaera</taxon>
    </lineage>
</organism>
<keyword id="KW-0028">Amino-acid biosynthesis</keyword>
<keyword id="KW-0055">Arginine biosynthesis</keyword>
<keyword id="KW-0963">Cytoplasm</keyword>
<keyword id="KW-0457">Lysine biosynthesis</keyword>
<keyword id="KW-0521">NADP</keyword>
<keyword id="KW-0560">Oxidoreductase</keyword>
<keyword id="KW-1185">Reference proteome</keyword>
<name>LYSY_SULTO</name>
<gene>
    <name evidence="1" type="primary">lysY</name>
    <name type="synonym">argC</name>
    <name type="ordered locus">STK_01950</name>
</gene>
<feature type="chain" id="PRO_0000112499" description="[LysW]-L-2-aminoadipate/[LysW]-L-glutamate phosphate reductase">
    <location>
        <begin position="1"/>
        <end position="349"/>
    </location>
</feature>
<feature type="active site" evidence="1">
    <location>
        <position position="150"/>
    </location>
</feature>
<feature type="binding site" evidence="1">
    <location>
        <begin position="10"/>
        <end position="13"/>
    </location>
    <ligand>
        <name>NADP(+)</name>
        <dbReference type="ChEBI" id="CHEBI:58349"/>
    </ligand>
</feature>
<feature type="binding site" evidence="1">
    <location>
        <position position="316"/>
    </location>
    <ligand>
        <name>NADP(+)</name>
        <dbReference type="ChEBI" id="CHEBI:58349"/>
    </ligand>
</feature>
<sequence length="349" mass="38700">MIRVAVIGGSGYTGGELLRILAVHPKIEVTYVTSREYAGKPITLVHPNLRGFYNMNFSQFSFDKLGDKADAVFLGLPHKVSLEYVPKILEMGIQVIDLSADFRLKDPTLYKIWYGYEHPYPDLLKKAVYGLPELHYEELKNAKLIASPGCNATATILAGAPLVASSLLETYKLISDVKVGSSEGGAKPHEGSHHPERQNAIRPYEADGHRHAAEAEQELSLIAKRDVKVSLVPHAVSSVRGALASVHGWLSSDISEMDMWKKSIEFYKGRKFIRIIRSNIHPYPDPKFVIGSNFADIGFAIEKRMQRITMFSAIDNLMKGAAGQAVQAFNISRGFEEDEGLRIPPLRPA</sequence>
<dbReference type="EC" id="1.2.1.103" evidence="1"/>
<dbReference type="EC" id="1.2.1.106" evidence="1"/>
<dbReference type="EMBL" id="BA000023">
    <property type="protein sequence ID" value="BAK54184.1"/>
    <property type="molecule type" value="Genomic_DNA"/>
</dbReference>
<dbReference type="RefSeq" id="WP_010978134.1">
    <property type="nucleotide sequence ID" value="NC_003106.2"/>
</dbReference>
<dbReference type="SMR" id="Q976J5"/>
<dbReference type="STRING" id="273063.STK_01950"/>
<dbReference type="GeneID" id="1458080"/>
<dbReference type="KEGG" id="sto:STK_01950"/>
<dbReference type="PATRIC" id="fig|273063.9.peg.239"/>
<dbReference type="eggNOG" id="arCOG00495">
    <property type="taxonomic scope" value="Archaea"/>
</dbReference>
<dbReference type="OrthoDB" id="372053at2157"/>
<dbReference type="UniPathway" id="UPA00033">
    <property type="reaction ID" value="UER00037"/>
</dbReference>
<dbReference type="UniPathway" id="UPA00068"/>
<dbReference type="Proteomes" id="UP000001015">
    <property type="component" value="Chromosome"/>
</dbReference>
<dbReference type="GO" id="GO:0005737">
    <property type="term" value="C:cytoplasm"/>
    <property type="evidence" value="ECO:0007669"/>
    <property type="project" value="UniProtKB-SubCell"/>
</dbReference>
<dbReference type="GO" id="GO:0043870">
    <property type="term" value="F:N-acetyl-gamma-aminoadipyl-phosphate reductase activity"/>
    <property type="evidence" value="ECO:0007669"/>
    <property type="project" value="RHEA"/>
</dbReference>
<dbReference type="GO" id="GO:0003942">
    <property type="term" value="F:N-acetyl-gamma-glutamyl-phosphate reductase activity"/>
    <property type="evidence" value="ECO:0007669"/>
    <property type="project" value="InterPro"/>
</dbReference>
<dbReference type="GO" id="GO:0051287">
    <property type="term" value="F:NAD binding"/>
    <property type="evidence" value="ECO:0007669"/>
    <property type="project" value="InterPro"/>
</dbReference>
<dbReference type="GO" id="GO:0070401">
    <property type="term" value="F:NADP+ binding"/>
    <property type="evidence" value="ECO:0007669"/>
    <property type="project" value="InterPro"/>
</dbReference>
<dbReference type="GO" id="GO:0042450">
    <property type="term" value="P:arginine biosynthetic process via ornithine"/>
    <property type="evidence" value="ECO:0007669"/>
    <property type="project" value="UniProtKB-UniRule"/>
</dbReference>
<dbReference type="GO" id="GO:0006526">
    <property type="term" value="P:L-arginine biosynthetic process"/>
    <property type="evidence" value="ECO:0007669"/>
    <property type="project" value="UniProtKB-UniPathway"/>
</dbReference>
<dbReference type="GO" id="GO:0019878">
    <property type="term" value="P:lysine biosynthetic process via aminoadipic acid"/>
    <property type="evidence" value="ECO:0007669"/>
    <property type="project" value="UniProtKB-UniRule"/>
</dbReference>
<dbReference type="CDD" id="cd23939">
    <property type="entry name" value="AGPR_1_C_LysY"/>
    <property type="match status" value="1"/>
</dbReference>
<dbReference type="CDD" id="cd17895">
    <property type="entry name" value="AGPR_1_N"/>
    <property type="match status" value="1"/>
</dbReference>
<dbReference type="Gene3D" id="3.30.360.10">
    <property type="entry name" value="Dihydrodipicolinate Reductase, domain 2"/>
    <property type="match status" value="1"/>
</dbReference>
<dbReference type="Gene3D" id="3.40.50.720">
    <property type="entry name" value="NAD(P)-binding Rossmann-like Domain"/>
    <property type="match status" value="1"/>
</dbReference>
<dbReference type="HAMAP" id="MF_00150">
    <property type="entry name" value="ArgC_type1"/>
    <property type="match status" value="1"/>
</dbReference>
<dbReference type="HAMAP" id="MF_02083">
    <property type="entry name" value="LysY"/>
    <property type="match status" value="1"/>
</dbReference>
<dbReference type="InterPro" id="IPR000706">
    <property type="entry name" value="AGPR_type-1"/>
</dbReference>
<dbReference type="InterPro" id="IPR037535">
    <property type="entry name" value="LysY"/>
</dbReference>
<dbReference type="InterPro" id="IPR036291">
    <property type="entry name" value="NAD(P)-bd_dom_sf"/>
</dbReference>
<dbReference type="InterPro" id="IPR050085">
    <property type="entry name" value="NAGSA_dehydrogenase"/>
</dbReference>
<dbReference type="InterPro" id="IPR000534">
    <property type="entry name" value="Semialdehyde_DH_NAD-bd"/>
</dbReference>
<dbReference type="NCBIfam" id="TIGR01850">
    <property type="entry name" value="argC"/>
    <property type="match status" value="1"/>
</dbReference>
<dbReference type="PANTHER" id="PTHR32338:SF11">
    <property type="entry name" value="[LYSW]-L-2-AMINOADIPATE_[LYSW]-L-GLUTAMATE PHOSPHATE REDUCTASE-RELATED"/>
    <property type="match status" value="1"/>
</dbReference>
<dbReference type="PANTHER" id="PTHR32338">
    <property type="entry name" value="N-ACETYL-GAMMA-GLUTAMYL-PHOSPHATE REDUCTASE, CHLOROPLASTIC-RELATED-RELATED"/>
    <property type="match status" value="1"/>
</dbReference>
<dbReference type="Pfam" id="PF01118">
    <property type="entry name" value="Semialdhyde_dh"/>
    <property type="match status" value="1"/>
</dbReference>
<dbReference type="Pfam" id="PF22698">
    <property type="entry name" value="Semialdhyde_dhC_1"/>
    <property type="match status" value="1"/>
</dbReference>
<dbReference type="SMART" id="SM00859">
    <property type="entry name" value="Semialdhyde_dh"/>
    <property type="match status" value="1"/>
</dbReference>
<dbReference type="SUPFAM" id="SSF55347">
    <property type="entry name" value="Glyceraldehyde-3-phosphate dehydrogenase-like, C-terminal domain"/>
    <property type="match status" value="1"/>
</dbReference>
<dbReference type="SUPFAM" id="SSF51735">
    <property type="entry name" value="NAD(P)-binding Rossmann-fold domains"/>
    <property type="match status" value="1"/>
</dbReference>
<accession>Q976J5</accession>
<accession>F9VMN8</accession>